<proteinExistence type="inferred from homology"/>
<feature type="chain" id="PRO_1000075876" description="Transcription elongation factor GreA">
    <location>
        <begin position="1"/>
        <end position="157"/>
    </location>
</feature>
<organism>
    <name type="scientific">Chelativorans sp. (strain BNC1)</name>
    <dbReference type="NCBI Taxonomy" id="266779"/>
    <lineage>
        <taxon>Bacteria</taxon>
        <taxon>Pseudomonadati</taxon>
        <taxon>Pseudomonadota</taxon>
        <taxon>Alphaproteobacteria</taxon>
        <taxon>Hyphomicrobiales</taxon>
        <taxon>Phyllobacteriaceae</taxon>
        <taxon>Chelativorans</taxon>
    </lineage>
</organism>
<gene>
    <name evidence="1" type="primary">greA</name>
    <name type="ordered locus">Meso_2118</name>
</gene>
<dbReference type="EMBL" id="CP000390">
    <property type="protein sequence ID" value="ABG63510.1"/>
    <property type="molecule type" value="Genomic_DNA"/>
</dbReference>
<dbReference type="SMR" id="Q11GG5"/>
<dbReference type="STRING" id="266779.Meso_2118"/>
<dbReference type="KEGG" id="mes:Meso_2118"/>
<dbReference type="eggNOG" id="COG0782">
    <property type="taxonomic scope" value="Bacteria"/>
</dbReference>
<dbReference type="HOGENOM" id="CLU_101379_2_0_5"/>
<dbReference type="OrthoDB" id="9808774at2"/>
<dbReference type="GO" id="GO:0003677">
    <property type="term" value="F:DNA binding"/>
    <property type="evidence" value="ECO:0007669"/>
    <property type="project" value="UniProtKB-UniRule"/>
</dbReference>
<dbReference type="GO" id="GO:0070063">
    <property type="term" value="F:RNA polymerase binding"/>
    <property type="evidence" value="ECO:0007669"/>
    <property type="project" value="InterPro"/>
</dbReference>
<dbReference type="GO" id="GO:0006354">
    <property type="term" value="P:DNA-templated transcription elongation"/>
    <property type="evidence" value="ECO:0007669"/>
    <property type="project" value="TreeGrafter"/>
</dbReference>
<dbReference type="GO" id="GO:0032784">
    <property type="term" value="P:regulation of DNA-templated transcription elongation"/>
    <property type="evidence" value="ECO:0007669"/>
    <property type="project" value="UniProtKB-UniRule"/>
</dbReference>
<dbReference type="FunFam" id="1.10.287.180:FF:000001">
    <property type="entry name" value="Transcription elongation factor GreA"/>
    <property type="match status" value="1"/>
</dbReference>
<dbReference type="FunFam" id="3.10.50.30:FF:000001">
    <property type="entry name" value="Transcription elongation factor GreA"/>
    <property type="match status" value="1"/>
</dbReference>
<dbReference type="Gene3D" id="3.10.50.30">
    <property type="entry name" value="Transcription elongation factor, GreA/GreB, C-terminal domain"/>
    <property type="match status" value="1"/>
</dbReference>
<dbReference type="Gene3D" id="1.10.287.180">
    <property type="entry name" value="Transcription elongation factor, GreA/GreB, N-terminal domain"/>
    <property type="match status" value="1"/>
</dbReference>
<dbReference type="HAMAP" id="MF_00105">
    <property type="entry name" value="GreA_GreB"/>
    <property type="match status" value="1"/>
</dbReference>
<dbReference type="InterPro" id="IPR036953">
    <property type="entry name" value="GreA/GreB_C_sf"/>
</dbReference>
<dbReference type="InterPro" id="IPR018151">
    <property type="entry name" value="TF_GreA/GreB_CS"/>
</dbReference>
<dbReference type="InterPro" id="IPR006359">
    <property type="entry name" value="Tscrpt_elong_fac_GreA"/>
</dbReference>
<dbReference type="InterPro" id="IPR028624">
    <property type="entry name" value="Tscrpt_elong_fac_GreA/B"/>
</dbReference>
<dbReference type="InterPro" id="IPR001437">
    <property type="entry name" value="Tscrpt_elong_fac_GreA/B_C"/>
</dbReference>
<dbReference type="InterPro" id="IPR023459">
    <property type="entry name" value="Tscrpt_elong_fac_GreA/B_fam"/>
</dbReference>
<dbReference type="InterPro" id="IPR022691">
    <property type="entry name" value="Tscrpt_elong_fac_GreA/B_N"/>
</dbReference>
<dbReference type="InterPro" id="IPR036805">
    <property type="entry name" value="Tscrpt_elong_fac_GreA/B_N_sf"/>
</dbReference>
<dbReference type="NCBIfam" id="TIGR01462">
    <property type="entry name" value="greA"/>
    <property type="match status" value="1"/>
</dbReference>
<dbReference type="NCBIfam" id="NF001261">
    <property type="entry name" value="PRK00226.1-2"/>
    <property type="match status" value="1"/>
</dbReference>
<dbReference type="NCBIfam" id="NF001263">
    <property type="entry name" value="PRK00226.1-4"/>
    <property type="match status" value="1"/>
</dbReference>
<dbReference type="NCBIfam" id="NF001264">
    <property type="entry name" value="PRK00226.1-5"/>
    <property type="match status" value="1"/>
</dbReference>
<dbReference type="PANTHER" id="PTHR30437">
    <property type="entry name" value="TRANSCRIPTION ELONGATION FACTOR GREA"/>
    <property type="match status" value="1"/>
</dbReference>
<dbReference type="PANTHER" id="PTHR30437:SF4">
    <property type="entry name" value="TRANSCRIPTION ELONGATION FACTOR GREA"/>
    <property type="match status" value="1"/>
</dbReference>
<dbReference type="Pfam" id="PF01272">
    <property type="entry name" value="GreA_GreB"/>
    <property type="match status" value="1"/>
</dbReference>
<dbReference type="Pfam" id="PF03449">
    <property type="entry name" value="GreA_GreB_N"/>
    <property type="match status" value="1"/>
</dbReference>
<dbReference type="PIRSF" id="PIRSF006092">
    <property type="entry name" value="GreA_GreB"/>
    <property type="match status" value="1"/>
</dbReference>
<dbReference type="SUPFAM" id="SSF54534">
    <property type="entry name" value="FKBP-like"/>
    <property type="match status" value="1"/>
</dbReference>
<dbReference type="SUPFAM" id="SSF46557">
    <property type="entry name" value="GreA transcript cleavage protein, N-terminal domain"/>
    <property type="match status" value="1"/>
</dbReference>
<dbReference type="PROSITE" id="PS00829">
    <property type="entry name" value="GREAB_1"/>
    <property type="match status" value="1"/>
</dbReference>
<dbReference type="PROSITE" id="PS00830">
    <property type="entry name" value="GREAB_2"/>
    <property type="match status" value="1"/>
</dbReference>
<reference key="1">
    <citation type="submission" date="2006-06" db="EMBL/GenBank/DDBJ databases">
        <title>Complete sequence of chromosome of Mesorhizobium sp. BNC1.</title>
        <authorList>
            <consortium name="US DOE Joint Genome Institute"/>
            <person name="Copeland A."/>
            <person name="Lucas S."/>
            <person name="Lapidus A."/>
            <person name="Barry K."/>
            <person name="Detter J.C."/>
            <person name="Glavina del Rio T."/>
            <person name="Hammon N."/>
            <person name="Israni S."/>
            <person name="Dalin E."/>
            <person name="Tice H."/>
            <person name="Pitluck S."/>
            <person name="Chertkov O."/>
            <person name="Brettin T."/>
            <person name="Bruce D."/>
            <person name="Han C."/>
            <person name="Tapia R."/>
            <person name="Gilna P."/>
            <person name="Schmutz J."/>
            <person name="Larimer F."/>
            <person name="Land M."/>
            <person name="Hauser L."/>
            <person name="Kyrpides N."/>
            <person name="Mikhailova N."/>
            <person name="Richardson P."/>
        </authorList>
    </citation>
    <scope>NUCLEOTIDE SEQUENCE [LARGE SCALE GENOMIC DNA]</scope>
    <source>
        <strain>BNC1</strain>
    </source>
</reference>
<keyword id="KW-0238">DNA-binding</keyword>
<keyword id="KW-0804">Transcription</keyword>
<keyword id="KW-0805">Transcription regulation</keyword>
<sequence>MNKVPMTLAGYESLKEELRWRQQEERPRIIEAIAEARAHGDLSENAEYHAAKEAQSLNEGRISELEDLIARAEVIDVTKLSGDTVKFGATVVLVDEDTEEEKTYQIVGDQEADVKSGRISISSPIARALIGKGVGDLIEVNAPGGARGYEVLRVQYG</sequence>
<accession>Q11GG5</accession>
<protein>
    <recommendedName>
        <fullName evidence="1">Transcription elongation factor GreA</fullName>
    </recommendedName>
    <alternativeName>
        <fullName evidence="1">Transcript cleavage factor GreA</fullName>
    </alternativeName>
</protein>
<evidence type="ECO:0000255" key="1">
    <source>
        <dbReference type="HAMAP-Rule" id="MF_00105"/>
    </source>
</evidence>
<name>GREA_CHESB</name>
<comment type="function">
    <text evidence="1">Necessary for efficient RNA polymerase transcription elongation past template-encoded arresting sites. The arresting sites in DNA have the property of trapping a certain fraction of elongating RNA polymerases that pass through, resulting in locked ternary complexes. Cleavage of the nascent transcript by cleavage factors such as GreA or GreB allows the resumption of elongation from the new 3'terminus. GreA releases sequences of 2 to 3 nucleotides.</text>
</comment>
<comment type="similarity">
    <text evidence="1">Belongs to the GreA/GreB family.</text>
</comment>